<accession>A9HDX7</accession>
<gene>
    <name evidence="1" type="primary">hemE</name>
    <name type="ordered locus">GDI1215</name>
    <name type="ordered locus">Gdia_1927</name>
</gene>
<sequence>MTDTGKPLLRVLQGEAVWPPPIWLMRQAGRYLPEFRALRDQADFITRCMTPDLATEITLQPIRRYAMDGAILFSDILILPWAMGQSLDFVAGKGPILGAIRSEADLARLDPKRVPDATAPVMETLSRLRAILDGPDPIGAAQGGRVTLLGFAGAPFTVACYMVEGHGSREFDATRGMAYSDPLLFDRLMATLTQATADMLVAQIDAGAEAVMLFDSWSGLLPPAQFRRHVIAPTRAIVQEIQARRPGVPVIGFPRLAGIMAAEYARETGLRVMALDTGADMAAMAGLLPPGMTVQGNLDPLLLLAGGDAMAQEARAIRDAMKGRPHVFNLGHGVVPPTPPEHVGDLVRTVREV</sequence>
<dbReference type="EC" id="4.1.1.37" evidence="1"/>
<dbReference type="EMBL" id="CP001189">
    <property type="protein sequence ID" value="ACI51687.1"/>
    <property type="molecule type" value="Genomic_DNA"/>
</dbReference>
<dbReference type="EMBL" id="AM889285">
    <property type="protein sequence ID" value="CAP55158.1"/>
    <property type="molecule type" value="Genomic_DNA"/>
</dbReference>
<dbReference type="RefSeq" id="WP_012224346.1">
    <property type="nucleotide sequence ID" value="NC_010125.1"/>
</dbReference>
<dbReference type="SMR" id="A9HDX7"/>
<dbReference type="STRING" id="272568.GDI1215"/>
<dbReference type="KEGG" id="gdi:GDI1215"/>
<dbReference type="KEGG" id="gdj:Gdia_1927"/>
<dbReference type="eggNOG" id="COG0407">
    <property type="taxonomic scope" value="Bacteria"/>
</dbReference>
<dbReference type="HOGENOM" id="CLU_040933_0_0_5"/>
<dbReference type="OrthoDB" id="9806656at2"/>
<dbReference type="UniPathway" id="UPA00251">
    <property type="reaction ID" value="UER00321"/>
</dbReference>
<dbReference type="Proteomes" id="UP000001176">
    <property type="component" value="Chromosome"/>
</dbReference>
<dbReference type="GO" id="GO:0005829">
    <property type="term" value="C:cytosol"/>
    <property type="evidence" value="ECO:0007669"/>
    <property type="project" value="TreeGrafter"/>
</dbReference>
<dbReference type="GO" id="GO:0004853">
    <property type="term" value="F:uroporphyrinogen decarboxylase activity"/>
    <property type="evidence" value="ECO:0007669"/>
    <property type="project" value="UniProtKB-UniRule"/>
</dbReference>
<dbReference type="GO" id="GO:0019353">
    <property type="term" value="P:protoporphyrinogen IX biosynthetic process from glutamate"/>
    <property type="evidence" value="ECO:0007669"/>
    <property type="project" value="TreeGrafter"/>
</dbReference>
<dbReference type="CDD" id="cd00717">
    <property type="entry name" value="URO-D"/>
    <property type="match status" value="1"/>
</dbReference>
<dbReference type="Gene3D" id="3.20.20.210">
    <property type="match status" value="1"/>
</dbReference>
<dbReference type="HAMAP" id="MF_00218">
    <property type="entry name" value="URO_D"/>
    <property type="match status" value="1"/>
</dbReference>
<dbReference type="InterPro" id="IPR038071">
    <property type="entry name" value="UROD/MetE-like_sf"/>
</dbReference>
<dbReference type="InterPro" id="IPR006361">
    <property type="entry name" value="Uroporphyrinogen_deCO2ase_HemE"/>
</dbReference>
<dbReference type="InterPro" id="IPR000257">
    <property type="entry name" value="Uroporphyrinogen_deCOase"/>
</dbReference>
<dbReference type="NCBIfam" id="TIGR01464">
    <property type="entry name" value="hemE"/>
    <property type="match status" value="1"/>
</dbReference>
<dbReference type="PANTHER" id="PTHR21091">
    <property type="entry name" value="METHYLTETRAHYDROFOLATE:HOMOCYSTEINE METHYLTRANSFERASE RELATED"/>
    <property type="match status" value="1"/>
</dbReference>
<dbReference type="PANTHER" id="PTHR21091:SF169">
    <property type="entry name" value="UROPORPHYRINOGEN DECARBOXYLASE"/>
    <property type="match status" value="1"/>
</dbReference>
<dbReference type="Pfam" id="PF01208">
    <property type="entry name" value="URO-D"/>
    <property type="match status" value="1"/>
</dbReference>
<dbReference type="SUPFAM" id="SSF51726">
    <property type="entry name" value="UROD/MetE-like"/>
    <property type="match status" value="1"/>
</dbReference>
<dbReference type="PROSITE" id="PS00906">
    <property type="entry name" value="UROD_1"/>
    <property type="match status" value="1"/>
</dbReference>
<dbReference type="PROSITE" id="PS00907">
    <property type="entry name" value="UROD_2"/>
    <property type="match status" value="1"/>
</dbReference>
<proteinExistence type="inferred from homology"/>
<comment type="function">
    <text evidence="1">Catalyzes the decarboxylation of four acetate groups of uroporphyrinogen-III to yield coproporphyrinogen-III.</text>
</comment>
<comment type="catalytic activity">
    <reaction evidence="1">
        <text>uroporphyrinogen III + 4 H(+) = coproporphyrinogen III + 4 CO2</text>
        <dbReference type="Rhea" id="RHEA:19865"/>
        <dbReference type="ChEBI" id="CHEBI:15378"/>
        <dbReference type="ChEBI" id="CHEBI:16526"/>
        <dbReference type="ChEBI" id="CHEBI:57308"/>
        <dbReference type="ChEBI" id="CHEBI:57309"/>
        <dbReference type="EC" id="4.1.1.37"/>
    </reaction>
</comment>
<comment type="pathway">
    <text evidence="1">Porphyrin-containing compound metabolism; protoporphyrin-IX biosynthesis; coproporphyrinogen-III from 5-aminolevulinate: step 4/4.</text>
</comment>
<comment type="subunit">
    <text evidence="1">Homodimer.</text>
</comment>
<comment type="subcellular location">
    <subcellularLocation>
        <location evidence="1">Cytoplasm</location>
    </subcellularLocation>
</comment>
<comment type="similarity">
    <text evidence="1">Belongs to the uroporphyrinogen decarboxylase family.</text>
</comment>
<feature type="chain" id="PRO_1000099996" description="Uroporphyrinogen decarboxylase">
    <location>
        <begin position="1"/>
        <end position="353"/>
    </location>
</feature>
<feature type="binding site" evidence="1">
    <location>
        <begin position="26"/>
        <end position="30"/>
    </location>
    <ligand>
        <name>substrate</name>
    </ligand>
</feature>
<feature type="binding site" evidence="1">
    <location>
        <position position="75"/>
    </location>
    <ligand>
        <name>substrate</name>
    </ligand>
</feature>
<feature type="binding site" evidence="1">
    <location>
        <position position="161"/>
    </location>
    <ligand>
        <name>substrate</name>
    </ligand>
</feature>
<feature type="binding site" evidence="1">
    <location>
        <position position="216"/>
    </location>
    <ligand>
        <name>substrate</name>
    </ligand>
</feature>
<feature type="binding site" evidence="1">
    <location>
        <position position="332"/>
    </location>
    <ligand>
        <name>substrate</name>
    </ligand>
</feature>
<feature type="site" description="Transition state stabilizer" evidence="1">
    <location>
        <position position="75"/>
    </location>
</feature>
<protein>
    <recommendedName>
        <fullName evidence="1">Uroporphyrinogen decarboxylase</fullName>
        <shortName evidence="1">UPD</shortName>
        <shortName evidence="1">URO-D</shortName>
        <ecNumber evidence="1">4.1.1.37</ecNumber>
    </recommendedName>
</protein>
<evidence type="ECO:0000255" key="1">
    <source>
        <dbReference type="HAMAP-Rule" id="MF_00218"/>
    </source>
</evidence>
<keyword id="KW-0963">Cytoplasm</keyword>
<keyword id="KW-0210">Decarboxylase</keyword>
<keyword id="KW-0456">Lyase</keyword>
<keyword id="KW-0627">Porphyrin biosynthesis</keyword>
<keyword id="KW-1185">Reference proteome</keyword>
<reference key="1">
    <citation type="journal article" date="2009" name="BMC Genomics">
        <title>Complete genome sequence of the sugarcane nitrogen-fixing endophyte Gluconacetobacter diazotrophicus Pal5.</title>
        <authorList>
            <person name="Bertalan M."/>
            <person name="Albano R."/>
            <person name="de Padua V."/>
            <person name="Rouws L."/>
            <person name="Rojas C."/>
            <person name="Hemerly A."/>
            <person name="Teixeira K."/>
            <person name="Schwab S."/>
            <person name="Araujo J."/>
            <person name="Oliveira A."/>
            <person name="Franca L."/>
            <person name="Magalhaes V."/>
            <person name="Alqueres S."/>
            <person name="Cardoso A."/>
            <person name="Almeida W."/>
            <person name="Loureiro M.M."/>
            <person name="Nogueira E."/>
            <person name="Cidade D."/>
            <person name="Oliveira D."/>
            <person name="Simao T."/>
            <person name="Macedo J."/>
            <person name="Valadao A."/>
            <person name="Dreschsel M."/>
            <person name="Freitas F."/>
            <person name="Vidal M."/>
            <person name="Guedes H."/>
            <person name="Rodrigues E."/>
            <person name="Meneses C."/>
            <person name="Brioso P."/>
            <person name="Pozzer L."/>
            <person name="Figueiredo D."/>
            <person name="Montano H."/>
            <person name="Junior J."/>
            <person name="de Souza Filho G."/>
            <person name="Martin Quintana Flores V."/>
            <person name="Ferreira B."/>
            <person name="Branco A."/>
            <person name="Gonzalez P."/>
            <person name="Guillobel H."/>
            <person name="Lemos M."/>
            <person name="Seibel L."/>
            <person name="Macedo J."/>
            <person name="Alves-Ferreira M."/>
            <person name="Sachetto-Martins G."/>
            <person name="Coelho A."/>
            <person name="Santos E."/>
            <person name="Amaral G."/>
            <person name="Neves A."/>
            <person name="Pacheco A.B."/>
            <person name="Carvalho D."/>
            <person name="Lery L."/>
            <person name="Bisch P."/>
            <person name="Rossle S.C."/>
            <person name="Urmenyi T."/>
            <person name="Rael Pereira A."/>
            <person name="Silva R."/>
            <person name="Rondinelli E."/>
            <person name="von Kruger W."/>
            <person name="Martins O."/>
            <person name="Baldani J.I."/>
            <person name="Ferreira P.C."/>
        </authorList>
    </citation>
    <scope>NUCLEOTIDE SEQUENCE [LARGE SCALE GENOMIC DNA]</scope>
    <source>
        <strain>ATCC 49037 / DSM 5601 / CCUG 37298 / CIP 103539 / LMG 7603 / PAl5</strain>
    </source>
</reference>
<reference key="2">
    <citation type="journal article" date="2010" name="Stand. Genomic Sci.">
        <title>Two genome sequences of the same bacterial strain, Gluconacetobacter diazotrophicus PAl 5, suggest a new standard in genome sequence submission.</title>
        <authorList>
            <person name="Giongo A."/>
            <person name="Tyler H.L."/>
            <person name="Zipperer U.N."/>
            <person name="Triplett E.W."/>
        </authorList>
    </citation>
    <scope>NUCLEOTIDE SEQUENCE [LARGE SCALE GENOMIC DNA]</scope>
    <source>
        <strain>ATCC 49037 / DSM 5601 / CCUG 37298 / CIP 103539 / LMG 7603 / PAl5</strain>
    </source>
</reference>
<name>DCUP_GLUDA</name>
<organism>
    <name type="scientific">Gluconacetobacter diazotrophicus (strain ATCC 49037 / DSM 5601 / CCUG 37298 / CIP 103539 / LMG 7603 / PAl5)</name>
    <dbReference type="NCBI Taxonomy" id="272568"/>
    <lineage>
        <taxon>Bacteria</taxon>
        <taxon>Pseudomonadati</taxon>
        <taxon>Pseudomonadota</taxon>
        <taxon>Alphaproteobacteria</taxon>
        <taxon>Acetobacterales</taxon>
        <taxon>Acetobacteraceae</taxon>
        <taxon>Gluconacetobacter</taxon>
    </lineage>
</organism>